<proteinExistence type="inferred from homology"/>
<sequence>MVTVLDLVNQGKRERHPEKAHRPDNVVLKKPEWIRVKAPVSRGYSETRDIVRSNKLVTVCEEAGCPNIGECWEKKHATFMIMGEICTRACAFCNVSTGIPTALDPNEPENVAKAVKQMGLTHVVITSVDRDDLADGGAQHFAEVIQAIREATPATTIEILTPDFLRKEGALEVVVRARPDVFNHNLETVPSRYLKVRPGARYFHSIRLLQRVKELDPTIFTKSGIMVGLGEERNEILQLMDDLRSADVDFMTIGQYLQPTRKHHPVIRFVTPDEFKSFETIGRTKGFLLVASSPLTRSSHHAGDDFAKLRAAREAQISARA</sequence>
<dbReference type="EC" id="2.8.1.8" evidence="1"/>
<dbReference type="EMBL" id="CP000758">
    <property type="protein sequence ID" value="ABS14781.1"/>
    <property type="molecule type" value="Genomic_DNA"/>
</dbReference>
<dbReference type="RefSeq" id="WP_012091976.1">
    <property type="nucleotide sequence ID" value="NC_009667.1"/>
</dbReference>
<dbReference type="SMR" id="A6X0M7"/>
<dbReference type="STRING" id="439375.Oant_2065"/>
<dbReference type="KEGG" id="oan:Oant_2065"/>
<dbReference type="PATRIC" id="fig|439375.7.peg.2171"/>
<dbReference type="eggNOG" id="COG0320">
    <property type="taxonomic scope" value="Bacteria"/>
</dbReference>
<dbReference type="HOGENOM" id="CLU_033144_2_1_5"/>
<dbReference type="PhylomeDB" id="A6X0M7"/>
<dbReference type="UniPathway" id="UPA00538">
    <property type="reaction ID" value="UER00593"/>
</dbReference>
<dbReference type="Proteomes" id="UP000002301">
    <property type="component" value="Chromosome 1"/>
</dbReference>
<dbReference type="GO" id="GO:0005737">
    <property type="term" value="C:cytoplasm"/>
    <property type="evidence" value="ECO:0007669"/>
    <property type="project" value="UniProtKB-SubCell"/>
</dbReference>
<dbReference type="GO" id="GO:0051539">
    <property type="term" value="F:4 iron, 4 sulfur cluster binding"/>
    <property type="evidence" value="ECO:0007669"/>
    <property type="project" value="UniProtKB-UniRule"/>
</dbReference>
<dbReference type="GO" id="GO:0016992">
    <property type="term" value="F:lipoate synthase activity"/>
    <property type="evidence" value="ECO:0007669"/>
    <property type="project" value="UniProtKB-UniRule"/>
</dbReference>
<dbReference type="GO" id="GO:0046872">
    <property type="term" value="F:metal ion binding"/>
    <property type="evidence" value="ECO:0007669"/>
    <property type="project" value="UniProtKB-KW"/>
</dbReference>
<dbReference type="CDD" id="cd01335">
    <property type="entry name" value="Radical_SAM"/>
    <property type="match status" value="1"/>
</dbReference>
<dbReference type="FunFam" id="3.20.20.70:FF:000040">
    <property type="entry name" value="Lipoyl synthase"/>
    <property type="match status" value="1"/>
</dbReference>
<dbReference type="Gene3D" id="3.20.20.70">
    <property type="entry name" value="Aldolase class I"/>
    <property type="match status" value="1"/>
</dbReference>
<dbReference type="HAMAP" id="MF_00206">
    <property type="entry name" value="Lipoyl_synth"/>
    <property type="match status" value="1"/>
</dbReference>
<dbReference type="InterPro" id="IPR013785">
    <property type="entry name" value="Aldolase_TIM"/>
</dbReference>
<dbReference type="InterPro" id="IPR006638">
    <property type="entry name" value="Elp3/MiaA/NifB-like_rSAM"/>
</dbReference>
<dbReference type="InterPro" id="IPR031691">
    <property type="entry name" value="LIAS_N"/>
</dbReference>
<dbReference type="InterPro" id="IPR003698">
    <property type="entry name" value="Lipoyl_synth"/>
</dbReference>
<dbReference type="InterPro" id="IPR007197">
    <property type="entry name" value="rSAM"/>
</dbReference>
<dbReference type="NCBIfam" id="TIGR00510">
    <property type="entry name" value="lipA"/>
    <property type="match status" value="1"/>
</dbReference>
<dbReference type="NCBIfam" id="NF004019">
    <property type="entry name" value="PRK05481.1"/>
    <property type="match status" value="1"/>
</dbReference>
<dbReference type="NCBIfam" id="NF009544">
    <property type="entry name" value="PRK12928.1"/>
    <property type="match status" value="1"/>
</dbReference>
<dbReference type="PANTHER" id="PTHR10949">
    <property type="entry name" value="LIPOYL SYNTHASE"/>
    <property type="match status" value="1"/>
</dbReference>
<dbReference type="PANTHER" id="PTHR10949:SF0">
    <property type="entry name" value="LIPOYL SYNTHASE, MITOCHONDRIAL"/>
    <property type="match status" value="1"/>
</dbReference>
<dbReference type="Pfam" id="PF16881">
    <property type="entry name" value="LIAS_N"/>
    <property type="match status" value="1"/>
</dbReference>
<dbReference type="Pfam" id="PF04055">
    <property type="entry name" value="Radical_SAM"/>
    <property type="match status" value="1"/>
</dbReference>
<dbReference type="PIRSF" id="PIRSF005963">
    <property type="entry name" value="Lipoyl_synth"/>
    <property type="match status" value="1"/>
</dbReference>
<dbReference type="SFLD" id="SFLDF00271">
    <property type="entry name" value="lipoyl_synthase"/>
    <property type="match status" value="1"/>
</dbReference>
<dbReference type="SFLD" id="SFLDG01058">
    <property type="entry name" value="lipoyl_synthase_like"/>
    <property type="match status" value="1"/>
</dbReference>
<dbReference type="SMART" id="SM00729">
    <property type="entry name" value="Elp3"/>
    <property type="match status" value="1"/>
</dbReference>
<dbReference type="SUPFAM" id="SSF102114">
    <property type="entry name" value="Radical SAM enzymes"/>
    <property type="match status" value="1"/>
</dbReference>
<dbReference type="PROSITE" id="PS51918">
    <property type="entry name" value="RADICAL_SAM"/>
    <property type="match status" value="1"/>
</dbReference>
<accession>A6X0M7</accession>
<evidence type="ECO:0000255" key="1">
    <source>
        <dbReference type="HAMAP-Rule" id="MF_00206"/>
    </source>
</evidence>
<evidence type="ECO:0000255" key="2">
    <source>
        <dbReference type="PROSITE-ProRule" id="PRU01266"/>
    </source>
</evidence>
<reference key="1">
    <citation type="journal article" date="2011" name="J. Bacteriol.">
        <title>Genome of Ochrobactrum anthropi ATCC 49188 T, a versatile opportunistic pathogen and symbiont of several eukaryotic hosts.</title>
        <authorList>
            <person name="Chain P.S."/>
            <person name="Lang D.M."/>
            <person name="Comerci D.J."/>
            <person name="Malfatti S.A."/>
            <person name="Vergez L.M."/>
            <person name="Shin M."/>
            <person name="Ugalde R.A."/>
            <person name="Garcia E."/>
            <person name="Tolmasky M.E."/>
        </authorList>
    </citation>
    <scope>NUCLEOTIDE SEQUENCE [LARGE SCALE GENOMIC DNA]</scope>
    <source>
        <strain>ATCC 49188 / DSM 6882 / CCUG 24695 / JCM 21032 / LMG 3331 / NBRC 15819 / NCTC 12168 / Alc 37</strain>
    </source>
</reference>
<comment type="function">
    <text evidence="1">Catalyzes the radical-mediated insertion of two sulfur atoms into the C-6 and C-8 positions of the octanoyl moiety bound to the lipoyl domains of lipoate-dependent enzymes, thereby converting the octanoylated domains into lipoylated derivatives.</text>
</comment>
<comment type="catalytic activity">
    <reaction evidence="1">
        <text>[[Fe-S] cluster scaffold protein carrying a second [4Fe-4S](2+) cluster] + N(6)-octanoyl-L-lysyl-[protein] + 2 oxidized [2Fe-2S]-[ferredoxin] + 2 S-adenosyl-L-methionine + 4 H(+) = [[Fe-S] cluster scaffold protein] + N(6)-[(R)-dihydrolipoyl]-L-lysyl-[protein] + 4 Fe(3+) + 2 hydrogen sulfide + 2 5'-deoxyadenosine + 2 L-methionine + 2 reduced [2Fe-2S]-[ferredoxin]</text>
        <dbReference type="Rhea" id="RHEA:16585"/>
        <dbReference type="Rhea" id="RHEA-COMP:9928"/>
        <dbReference type="Rhea" id="RHEA-COMP:10000"/>
        <dbReference type="Rhea" id="RHEA-COMP:10001"/>
        <dbReference type="Rhea" id="RHEA-COMP:10475"/>
        <dbReference type="Rhea" id="RHEA-COMP:14568"/>
        <dbReference type="Rhea" id="RHEA-COMP:14569"/>
        <dbReference type="ChEBI" id="CHEBI:15378"/>
        <dbReference type="ChEBI" id="CHEBI:17319"/>
        <dbReference type="ChEBI" id="CHEBI:29034"/>
        <dbReference type="ChEBI" id="CHEBI:29919"/>
        <dbReference type="ChEBI" id="CHEBI:33722"/>
        <dbReference type="ChEBI" id="CHEBI:33737"/>
        <dbReference type="ChEBI" id="CHEBI:33738"/>
        <dbReference type="ChEBI" id="CHEBI:57844"/>
        <dbReference type="ChEBI" id="CHEBI:59789"/>
        <dbReference type="ChEBI" id="CHEBI:78809"/>
        <dbReference type="ChEBI" id="CHEBI:83100"/>
        <dbReference type="EC" id="2.8.1.8"/>
    </reaction>
</comment>
<comment type="cofactor">
    <cofactor evidence="1">
        <name>[4Fe-4S] cluster</name>
        <dbReference type="ChEBI" id="CHEBI:49883"/>
    </cofactor>
    <text evidence="1">Binds 2 [4Fe-4S] clusters per subunit. One cluster is coordinated with 3 cysteines and an exchangeable S-adenosyl-L-methionine.</text>
</comment>
<comment type="pathway">
    <text evidence="1">Protein modification; protein lipoylation via endogenous pathway; protein N(6)-(lipoyl)lysine from octanoyl-[acyl-carrier-protein]: step 2/2.</text>
</comment>
<comment type="subcellular location">
    <subcellularLocation>
        <location evidence="1">Cytoplasm</location>
    </subcellularLocation>
</comment>
<comment type="similarity">
    <text evidence="1">Belongs to the radical SAM superfamily. Lipoyl synthase family.</text>
</comment>
<keyword id="KW-0004">4Fe-4S</keyword>
<keyword id="KW-0963">Cytoplasm</keyword>
<keyword id="KW-0408">Iron</keyword>
<keyword id="KW-0411">Iron-sulfur</keyword>
<keyword id="KW-0479">Metal-binding</keyword>
<keyword id="KW-1185">Reference proteome</keyword>
<keyword id="KW-0949">S-adenosyl-L-methionine</keyword>
<keyword id="KW-0808">Transferase</keyword>
<name>LIPA_BRUA4</name>
<organism>
    <name type="scientific">Brucella anthropi (strain ATCC 49188 / DSM 6882 / CCUG 24695 / JCM 21032 / LMG 3331 / NBRC 15819 / NCTC 12168 / Alc 37)</name>
    <name type="common">Ochrobactrum anthropi</name>
    <dbReference type="NCBI Taxonomy" id="439375"/>
    <lineage>
        <taxon>Bacteria</taxon>
        <taxon>Pseudomonadati</taxon>
        <taxon>Pseudomonadota</taxon>
        <taxon>Alphaproteobacteria</taxon>
        <taxon>Hyphomicrobiales</taxon>
        <taxon>Brucellaceae</taxon>
        <taxon>Brucella/Ochrobactrum group</taxon>
        <taxon>Brucella</taxon>
    </lineage>
</organism>
<protein>
    <recommendedName>
        <fullName evidence="1">Lipoyl synthase</fullName>
        <ecNumber evidence="1">2.8.1.8</ecNumber>
    </recommendedName>
    <alternativeName>
        <fullName evidence="1">Lip-syn</fullName>
        <shortName evidence="1">LS</shortName>
    </alternativeName>
    <alternativeName>
        <fullName evidence="1">Lipoate synthase</fullName>
    </alternativeName>
    <alternativeName>
        <fullName evidence="1">Lipoic acid synthase</fullName>
    </alternativeName>
    <alternativeName>
        <fullName evidence="1">Sulfur insertion protein LipA</fullName>
    </alternativeName>
</protein>
<feature type="chain" id="PRO_1000012249" description="Lipoyl synthase">
    <location>
        <begin position="1"/>
        <end position="321"/>
    </location>
</feature>
<feature type="domain" description="Radical SAM core" evidence="2">
    <location>
        <begin position="72"/>
        <end position="288"/>
    </location>
</feature>
<feature type="binding site" evidence="1">
    <location>
        <position position="60"/>
    </location>
    <ligand>
        <name>[4Fe-4S] cluster</name>
        <dbReference type="ChEBI" id="CHEBI:49883"/>
        <label>1</label>
    </ligand>
</feature>
<feature type="binding site" evidence="1">
    <location>
        <position position="65"/>
    </location>
    <ligand>
        <name>[4Fe-4S] cluster</name>
        <dbReference type="ChEBI" id="CHEBI:49883"/>
        <label>1</label>
    </ligand>
</feature>
<feature type="binding site" evidence="1">
    <location>
        <position position="71"/>
    </location>
    <ligand>
        <name>[4Fe-4S] cluster</name>
        <dbReference type="ChEBI" id="CHEBI:49883"/>
        <label>1</label>
    </ligand>
</feature>
<feature type="binding site" evidence="1">
    <location>
        <position position="86"/>
    </location>
    <ligand>
        <name>[4Fe-4S] cluster</name>
        <dbReference type="ChEBI" id="CHEBI:49883"/>
        <label>2</label>
        <note>4Fe-4S-S-AdoMet</note>
    </ligand>
</feature>
<feature type="binding site" evidence="1">
    <location>
        <position position="90"/>
    </location>
    <ligand>
        <name>[4Fe-4S] cluster</name>
        <dbReference type="ChEBI" id="CHEBI:49883"/>
        <label>2</label>
        <note>4Fe-4S-S-AdoMet</note>
    </ligand>
</feature>
<feature type="binding site" evidence="1">
    <location>
        <position position="93"/>
    </location>
    <ligand>
        <name>[4Fe-4S] cluster</name>
        <dbReference type="ChEBI" id="CHEBI:49883"/>
        <label>2</label>
        <note>4Fe-4S-S-AdoMet</note>
    </ligand>
</feature>
<feature type="binding site" evidence="1">
    <location>
        <position position="299"/>
    </location>
    <ligand>
        <name>[4Fe-4S] cluster</name>
        <dbReference type="ChEBI" id="CHEBI:49883"/>
        <label>1</label>
    </ligand>
</feature>
<gene>
    <name evidence="1" type="primary">lipA</name>
    <name type="ordered locus">Oant_2065</name>
</gene>